<proteinExistence type="evidence at protein level"/>
<reference key="1">
    <citation type="journal article" date="2005" name="Science">
        <title>The transcriptional landscape of the mammalian genome.</title>
        <authorList>
            <person name="Carninci P."/>
            <person name="Kasukawa T."/>
            <person name="Katayama S."/>
            <person name="Gough J."/>
            <person name="Frith M.C."/>
            <person name="Maeda N."/>
            <person name="Oyama R."/>
            <person name="Ravasi T."/>
            <person name="Lenhard B."/>
            <person name="Wells C."/>
            <person name="Kodzius R."/>
            <person name="Shimokawa K."/>
            <person name="Bajic V.B."/>
            <person name="Brenner S.E."/>
            <person name="Batalov S."/>
            <person name="Forrest A.R."/>
            <person name="Zavolan M."/>
            <person name="Davis M.J."/>
            <person name="Wilming L.G."/>
            <person name="Aidinis V."/>
            <person name="Allen J.E."/>
            <person name="Ambesi-Impiombato A."/>
            <person name="Apweiler R."/>
            <person name="Aturaliya R.N."/>
            <person name="Bailey T.L."/>
            <person name="Bansal M."/>
            <person name="Baxter L."/>
            <person name="Beisel K.W."/>
            <person name="Bersano T."/>
            <person name="Bono H."/>
            <person name="Chalk A.M."/>
            <person name="Chiu K.P."/>
            <person name="Choudhary V."/>
            <person name="Christoffels A."/>
            <person name="Clutterbuck D.R."/>
            <person name="Crowe M.L."/>
            <person name="Dalla E."/>
            <person name="Dalrymple B.P."/>
            <person name="de Bono B."/>
            <person name="Della Gatta G."/>
            <person name="di Bernardo D."/>
            <person name="Down T."/>
            <person name="Engstrom P."/>
            <person name="Fagiolini M."/>
            <person name="Faulkner G."/>
            <person name="Fletcher C.F."/>
            <person name="Fukushima T."/>
            <person name="Furuno M."/>
            <person name="Futaki S."/>
            <person name="Gariboldi M."/>
            <person name="Georgii-Hemming P."/>
            <person name="Gingeras T.R."/>
            <person name="Gojobori T."/>
            <person name="Green R.E."/>
            <person name="Gustincich S."/>
            <person name="Harbers M."/>
            <person name="Hayashi Y."/>
            <person name="Hensch T.K."/>
            <person name="Hirokawa N."/>
            <person name="Hill D."/>
            <person name="Huminiecki L."/>
            <person name="Iacono M."/>
            <person name="Ikeo K."/>
            <person name="Iwama A."/>
            <person name="Ishikawa T."/>
            <person name="Jakt M."/>
            <person name="Kanapin A."/>
            <person name="Katoh M."/>
            <person name="Kawasawa Y."/>
            <person name="Kelso J."/>
            <person name="Kitamura H."/>
            <person name="Kitano H."/>
            <person name="Kollias G."/>
            <person name="Krishnan S.P."/>
            <person name="Kruger A."/>
            <person name="Kummerfeld S.K."/>
            <person name="Kurochkin I.V."/>
            <person name="Lareau L.F."/>
            <person name="Lazarevic D."/>
            <person name="Lipovich L."/>
            <person name="Liu J."/>
            <person name="Liuni S."/>
            <person name="McWilliam S."/>
            <person name="Madan Babu M."/>
            <person name="Madera M."/>
            <person name="Marchionni L."/>
            <person name="Matsuda H."/>
            <person name="Matsuzawa S."/>
            <person name="Miki H."/>
            <person name="Mignone F."/>
            <person name="Miyake S."/>
            <person name="Morris K."/>
            <person name="Mottagui-Tabar S."/>
            <person name="Mulder N."/>
            <person name="Nakano N."/>
            <person name="Nakauchi H."/>
            <person name="Ng P."/>
            <person name="Nilsson R."/>
            <person name="Nishiguchi S."/>
            <person name="Nishikawa S."/>
            <person name="Nori F."/>
            <person name="Ohara O."/>
            <person name="Okazaki Y."/>
            <person name="Orlando V."/>
            <person name="Pang K.C."/>
            <person name="Pavan W.J."/>
            <person name="Pavesi G."/>
            <person name="Pesole G."/>
            <person name="Petrovsky N."/>
            <person name="Piazza S."/>
            <person name="Reed J."/>
            <person name="Reid J.F."/>
            <person name="Ring B.Z."/>
            <person name="Ringwald M."/>
            <person name="Rost B."/>
            <person name="Ruan Y."/>
            <person name="Salzberg S.L."/>
            <person name="Sandelin A."/>
            <person name="Schneider C."/>
            <person name="Schoenbach C."/>
            <person name="Sekiguchi K."/>
            <person name="Semple C.A."/>
            <person name="Seno S."/>
            <person name="Sessa L."/>
            <person name="Sheng Y."/>
            <person name="Shibata Y."/>
            <person name="Shimada H."/>
            <person name="Shimada K."/>
            <person name="Silva D."/>
            <person name="Sinclair B."/>
            <person name="Sperling S."/>
            <person name="Stupka E."/>
            <person name="Sugiura K."/>
            <person name="Sultana R."/>
            <person name="Takenaka Y."/>
            <person name="Taki K."/>
            <person name="Tammoja K."/>
            <person name="Tan S.L."/>
            <person name="Tang S."/>
            <person name="Taylor M.S."/>
            <person name="Tegner J."/>
            <person name="Teichmann S.A."/>
            <person name="Ueda H.R."/>
            <person name="van Nimwegen E."/>
            <person name="Verardo R."/>
            <person name="Wei C.L."/>
            <person name="Yagi K."/>
            <person name="Yamanishi H."/>
            <person name="Zabarovsky E."/>
            <person name="Zhu S."/>
            <person name="Zimmer A."/>
            <person name="Hide W."/>
            <person name="Bult C."/>
            <person name="Grimmond S.M."/>
            <person name="Teasdale R.D."/>
            <person name="Liu E.T."/>
            <person name="Brusic V."/>
            <person name="Quackenbush J."/>
            <person name="Wahlestedt C."/>
            <person name="Mattick J.S."/>
            <person name="Hume D.A."/>
            <person name="Kai C."/>
            <person name="Sasaki D."/>
            <person name="Tomaru Y."/>
            <person name="Fukuda S."/>
            <person name="Kanamori-Katayama M."/>
            <person name="Suzuki M."/>
            <person name="Aoki J."/>
            <person name="Arakawa T."/>
            <person name="Iida J."/>
            <person name="Imamura K."/>
            <person name="Itoh M."/>
            <person name="Kato T."/>
            <person name="Kawaji H."/>
            <person name="Kawagashira N."/>
            <person name="Kawashima T."/>
            <person name="Kojima M."/>
            <person name="Kondo S."/>
            <person name="Konno H."/>
            <person name="Nakano K."/>
            <person name="Ninomiya N."/>
            <person name="Nishio T."/>
            <person name="Okada M."/>
            <person name="Plessy C."/>
            <person name="Shibata K."/>
            <person name="Shiraki T."/>
            <person name="Suzuki S."/>
            <person name="Tagami M."/>
            <person name="Waki K."/>
            <person name="Watahiki A."/>
            <person name="Okamura-Oho Y."/>
            <person name="Suzuki H."/>
            <person name="Kawai J."/>
            <person name="Hayashizaki Y."/>
        </authorList>
    </citation>
    <scope>NUCLEOTIDE SEQUENCE [LARGE SCALE MRNA]</scope>
    <source>
        <strain>C57BL/6J</strain>
        <tissue>Amnion</tissue>
        <tissue>Embryo</tissue>
        <tissue>Forelimb</tissue>
        <tissue>Stomach</tissue>
    </source>
</reference>
<reference key="2">
    <citation type="submission" date="2005-07" db="EMBL/GenBank/DDBJ databases">
        <authorList>
            <person name="Mural R.J."/>
            <person name="Adams M.D."/>
            <person name="Myers E.W."/>
            <person name="Smith H.O."/>
            <person name="Venter J.C."/>
        </authorList>
    </citation>
    <scope>NUCLEOTIDE SEQUENCE [LARGE SCALE GENOMIC DNA]</scope>
</reference>
<reference key="3">
    <citation type="journal article" date="2004" name="Genome Res.">
        <title>The status, quality, and expansion of the NIH full-length cDNA project: the Mammalian Gene Collection (MGC).</title>
        <authorList>
            <consortium name="The MGC Project Team"/>
        </authorList>
    </citation>
    <scope>NUCLEOTIDE SEQUENCE [LARGE SCALE MRNA]</scope>
</reference>
<reference key="4">
    <citation type="journal article" date="2000" name="Cell">
        <title>PHAX, a mediator of U snRNA nuclear export whose activity is regulated by phosphorylation.</title>
        <authorList>
            <person name="Ohno M."/>
            <person name="Segref A."/>
            <person name="Bachi A."/>
            <person name="Wilm M."/>
            <person name="Mattaj I.W."/>
        </authorList>
    </citation>
    <scope>IDENTIFICATION IN A U SNRNA EXPORT COMPLEX WITH PHAX/RNUXA; NCBP1; RAN; XPO1 AND M7G-CAPPED RNA</scope>
</reference>
<reference key="5">
    <citation type="journal article" date="2007" name="Proc. Natl. Acad. Sci. U.S.A.">
        <title>Large-scale phosphorylation analysis of mouse liver.</title>
        <authorList>
            <person name="Villen J."/>
            <person name="Beausoleil S.A."/>
            <person name="Gerber S.A."/>
            <person name="Gygi S.P."/>
        </authorList>
    </citation>
    <scope>IDENTIFICATION BY MASS SPECTROMETRY [LARGE SCALE ANALYSIS]</scope>
    <source>
        <tissue>Liver</tissue>
    </source>
</reference>
<reference key="6">
    <citation type="journal article" date="2009" name="Cell">
        <title>Ars2 links the nuclear cap-binding complex to RNA interference and cell proliferation.</title>
        <authorList>
            <person name="Gruber J.J."/>
            <person name="Zatechka D.S."/>
            <person name="Sabin L.R."/>
            <person name="Yong J."/>
            <person name="Lum J.J."/>
            <person name="Kong M."/>
            <person name="Zong W.-X."/>
            <person name="Zhang Z."/>
            <person name="Lau C.-K."/>
            <person name="Rawlings J."/>
            <person name="Cherry S."/>
            <person name="Ihle J.N."/>
            <person name="Dreyfuss G."/>
            <person name="Thompson C.B."/>
        </authorList>
    </citation>
    <scope>FUNCTION IN MIRNAS BIOGENESIS</scope>
</reference>
<reference key="7">
    <citation type="journal article" date="2010" name="Cell">
        <title>A tissue-specific atlas of mouse protein phosphorylation and expression.</title>
        <authorList>
            <person name="Huttlin E.L."/>
            <person name="Jedrychowski M.P."/>
            <person name="Elias J.E."/>
            <person name="Goswami T."/>
            <person name="Rad R."/>
            <person name="Beausoleil S.A."/>
            <person name="Villen J."/>
            <person name="Haas W."/>
            <person name="Sowa M.E."/>
            <person name="Gygi S.P."/>
        </authorList>
    </citation>
    <scope>PHOSPHORYLATION [LARGE SCALE ANALYSIS] AT SER-13</scope>
    <scope>IDENTIFICATION BY MASS SPECTROMETRY [LARGE SCALE ANALYSIS]</scope>
    <source>
        <tissue>Brain</tissue>
        <tissue>Heart</tissue>
        <tissue>Kidney</tissue>
        <tissue>Liver</tissue>
        <tissue>Lung</tissue>
        <tissue>Spleen</tissue>
        <tissue>Testis</tissue>
    </source>
</reference>
<reference key="8">
    <citation type="journal article" date="2014" name="Mol. Cell. Proteomics">
        <title>Immunoaffinity enrichment and mass spectrometry analysis of protein methylation.</title>
        <authorList>
            <person name="Guo A."/>
            <person name="Gu H."/>
            <person name="Zhou J."/>
            <person name="Mulhern D."/>
            <person name="Wang Y."/>
            <person name="Lee K.A."/>
            <person name="Yang V."/>
            <person name="Aguiar M."/>
            <person name="Kornhauser J."/>
            <person name="Jia X."/>
            <person name="Ren J."/>
            <person name="Beausoleil S.A."/>
            <person name="Silva J.C."/>
            <person name="Vemulapalli V."/>
            <person name="Bedford M.T."/>
            <person name="Comb M.J."/>
        </authorList>
    </citation>
    <scope>METHYLATION [LARGE SCALE ANALYSIS] AT ARG-146</scope>
    <scope>IDENTIFICATION BY MASS SPECTROMETRY [LARGE SCALE ANALYSIS]</scope>
    <source>
        <tissue>Brain</tissue>
    </source>
</reference>
<name>NCBP2_MOUSE</name>
<gene>
    <name type="primary">Ncbp2</name>
    <name type="synonym">Cbp20</name>
</gene>
<protein>
    <recommendedName>
        <fullName>Nuclear cap-binding protein subunit 2</fullName>
    </recommendedName>
    <alternativeName>
        <fullName>20 kDa nuclear cap-binding protein</fullName>
    </alternativeName>
    <alternativeName>
        <fullName>NCBP 20 kDa subunit</fullName>
        <shortName>CBP20</shortName>
    </alternativeName>
</protein>
<dbReference type="EMBL" id="AK008980">
    <property type="protein sequence ID" value="BAB26004.1"/>
    <property type="molecule type" value="mRNA"/>
</dbReference>
<dbReference type="EMBL" id="AK012659">
    <property type="protein sequence ID" value="BAB28389.1"/>
    <property type="molecule type" value="mRNA"/>
</dbReference>
<dbReference type="EMBL" id="AK077841">
    <property type="protein sequence ID" value="BAC37030.1"/>
    <property type="molecule type" value="mRNA"/>
</dbReference>
<dbReference type="EMBL" id="AK147027">
    <property type="protein sequence ID" value="BAE27620.1"/>
    <property type="molecule type" value="mRNA"/>
</dbReference>
<dbReference type="EMBL" id="CH466521">
    <property type="protein sequence ID" value="EDK97760.1"/>
    <property type="molecule type" value="Genomic_DNA"/>
</dbReference>
<dbReference type="EMBL" id="BC118926">
    <property type="protein sequence ID" value="AAI18927.1"/>
    <property type="molecule type" value="mRNA"/>
</dbReference>
<dbReference type="CCDS" id="CCDS28110.1"/>
<dbReference type="RefSeq" id="NP_080830.1">
    <property type="nucleotide sequence ID" value="NM_026554.4"/>
</dbReference>
<dbReference type="SMR" id="Q9CQ49"/>
<dbReference type="BioGRID" id="212651">
    <property type="interactions" value="38"/>
</dbReference>
<dbReference type="ComplexPortal" id="CPX-923">
    <property type="entry name" value="Nuclear cap-binding complex"/>
</dbReference>
<dbReference type="FunCoup" id="Q9CQ49">
    <property type="interactions" value="3541"/>
</dbReference>
<dbReference type="IntAct" id="Q9CQ49">
    <property type="interactions" value="27"/>
</dbReference>
<dbReference type="MINT" id="Q9CQ49"/>
<dbReference type="STRING" id="10090.ENSMUSP00000023460"/>
<dbReference type="iPTMnet" id="Q9CQ49"/>
<dbReference type="PhosphoSitePlus" id="Q9CQ49"/>
<dbReference type="PaxDb" id="10090-ENSMUSP00000023460"/>
<dbReference type="PeptideAtlas" id="Q9CQ49"/>
<dbReference type="ProteomicsDB" id="286154"/>
<dbReference type="Pumba" id="Q9CQ49"/>
<dbReference type="Antibodypedia" id="33952">
    <property type="antibodies" value="189 antibodies from 29 providers"/>
</dbReference>
<dbReference type="DNASU" id="68092"/>
<dbReference type="Ensembl" id="ENSMUST00000023460.7">
    <property type="protein sequence ID" value="ENSMUSP00000023460.7"/>
    <property type="gene ID" value="ENSMUSG00000022774.14"/>
</dbReference>
<dbReference type="GeneID" id="68092"/>
<dbReference type="KEGG" id="mmu:68092"/>
<dbReference type="UCSC" id="uc007yxz.2">
    <property type="organism name" value="mouse"/>
</dbReference>
<dbReference type="AGR" id="MGI:1915342"/>
<dbReference type="CTD" id="22916"/>
<dbReference type="MGI" id="MGI:1915342">
    <property type="gene designation" value="Ncbp2"/>
</dbReference>
<dbReference type="VEuPathDB" id="HostDB:ENSMUSG00000022774"/>
<dbReference type="eggNOG" id="KOG0121">
    <property type="taxonomic scope" value="Eukaryota"/>
</dbReference>
<dbReference type="GeneTree" id="ENSGT00390000003197"/>
<dbReference type="HOGENOM" id="CLU_070952_2_0_1"/>
<dbReference type="InParanoid" id="Q9CQ49"/>
<dbReference type="OMA" id="TKCASPE"/>
<dbReference type="OrthoDB" id="34280at9989"/>
<dbReference type="PhylomeDB" id="Q9CQ49"/>
<dbReference type="TreeFam" id="TF313897"/>
<dbReference type="Reactome" id="R-MMU-111367">
    <property type="pathway name" value="SLBP independent Processing of Histone Pre-mRNAs"/>
</dbReference>
<dbReference type="Reactome" id="R-MMU-112382">
    <property type="pathway name" value="Formation of RNA Pol II elongation complex"/>
</dbReference>
<dbReference type="Reactome" id="R-MMU-113418">
    <property type="pathway name" value="Formation of the Early Elongation Complex"/>
</dbReference>
<dbReference type="Reactome" id="R-MMU-159227">
    <property type="pathway name" value="Transport of the SLBP independent Mature mRNA"/>
</dbReference>
<dbReference type="Reactome" id="R-MMU-159230">
    <property type="pathway name" value="Transport of the SLBP Dependant Mature mRNA"/>
</dbReference>
<dbReference type="Reactome" id="R-MMU-159231">
    <property type="pathway name" value="Transport of Mature mRNA Derived from an Intronless Transcript"/>
</dbReference>
<dbReference type="Reactome" id="R-MMU-159236">
    <property type="pathway name" value="Transport of Mature mRNA derived from an Intron-Containing Transcript"/>
</dbReference>
<dbReference type="Reactome" id="R-MMU-674695">
    <property type="pathway name" value="RNA Polymerase II Pre-transcription Events"/>
</dbReference>
<dbReference type="Reactome" id="R-MMU-6803529">
    <property type="pathway name" value="FGFR2 alternative splicing"/>
</dbReference>
<dbReference type="Reactome" id="R-MMU-6807505">
    <property type="pathway name" value="RNA polymerase II transcribes snRNA genes"/>
</dbReference>
<dbReference type="Reactome" id="R-MMU-72086">
    <property type="pathway name" value="mRNA Capping"/>
</dbReference>
<dbReference type="Reactome" id="R-MMU-72163">
    <property type="pathway name" value="mRNA Splicing - Major Pathway"/>
</dbReference>
<dbReference type="Reactome" id="R-MMU-72165">
    <property type="pathway name" value="mRNA Splicing - Minor Pathway"/>
</dbReference>
<dbReference type="Reactome" id="R-MMU-72187">
    <property type="pathway name" value="mRNA 3'-end processing"/>
</dbReference>
<dbReference type="Reactome" id="R-MMU-72203">
    <property type="pathway name" value="Processing of Capped Intron-Containing Pre-mRNA"/>
</dbReference>
<dbReference type="Reactome" id="R-MMU-73856">
    <property type="pathway name" value="RNA Polymerase II Transcription Termination"/>
</dbReference>
<dbReference type="Reactome" id="R-MMU-77588">
    <property type="pathway name" value="SLBP Dependent Processing of Replication-Dependent Histone Pre-mRNAs"/>
</dbReference>
<dbReference type="Reactome" id="R-MMU-77595">
    <property type="pathway name" value="Processing of Intronless Pre-mRNAs"/>
</dbReference>
<dbReference type="Reactome" id="R-MMU-975956">
    <property type="pathway name" value="Nonsense Mediated Decay (NMD) independent of the Exon Junction Complex (EJC)"/>
</dbReference>
<dbReference type="Reactome" id="R-MMU-975957">
    <property type="pathway name" value="Nonsense Mediated Decay (NMD) enhanced by the Exon Junction Complex (EJC)"/>
</dbReference>
<dbReference type="BioGRID-ORCS" id="68092">
    <property type="hits" value="28 hits in 80 CRISPR screens"/>
</dbReference>
<dbReference type="ChiTaRS" id="Ncbp2">
    <property type="organism name" value="mouse"/>
</dbReference>
<dbReference type="PRO" id="PR:Q9CQ49"/>
<dbReference type="Proteomes" id="UP000000589">
    <property type="component" value="Chromosome 16"/>
</dbReference>
<dbReference type="RNAct" id="Q9CQ49">
    <property type="molecule type" value="protein"/>
</dbReference>
<dbReference type="Bgee" id="ENSMUSG00000022774">
    <property type="expression patterns" value="Expressed in pigmented layer of retina and 270 other cell types or tissues"/>
</dbReference>
<dbReference type="ExpressionAtlas" id="Q9CQ49">
    <property type="expression patterns" value="baseline and differential"/>
</dbReference>
<dbReference type="GO" id="GO:0036064">
    <property type="term" value="C:ciliary basal body"/>
    <property type="evidence" value="ECO:0007669"/>
    <property type="project" value="Ensembl"/>
</dbReference>
<dbReference type="GO" id="GO:0005737">
    <property type="term" value="C:cytoplasm"/>
    <property type="evidence" value="ECO:0000250"/>
    <property type="project" value="UniProtKB"/>
</dbReference>
<dbReference type="GO" id="GO:0005829">
    <property type="term" value="C:cytosol"/>
    <property type="evidence" value="ECO:0007669"/>
    <property type="project" value="Ensembl"/>
</dbReference>
<dbReference type="GO" id="GO:0005846">
    <property type="term" value="C:nuclear cap binding complex"/>
    <property type="evidence" value="ECO:0000250"/>
    <property type="project" value="UniProtKB"/>
</dbReference>
<dbReference type="GO" id="GO:0005654">
    <property type="term" value="C:nucleoplasm"/>
    <property type="evidence" value="ECO:0000250"/>
    <property type="project" value="UniProtKB"/>
</dbReference>
<dbReference type="GO" id="GO:0005634">
    <property type="term" value="C:nucleus"/>
    <property type="evidence" value="ECO:0000250"/>
    <property type="project" value="UniProtKB"/>
</dbReference>
<dbReference type="GO" id="GO:0003729">
    <property type="term" value="F:mRNA binding"/>
    <property type="evidence" value="ECO:0000250"/>
    <property type="project" value="UniProtKB"/>
</dbReference>
<dbReference type="GO" id="GO:0000340">
    <property type="term" value="F:RNA 7-methylguanosine cap binding"/>
    <property type="evidence" value="ECO:0000250"/>
    <property type="project" value="UniProtKB"/>
</dbReference>
<dbReference type="GO" id="GO:0017069">
    <property type="term" value="F:snRNA binding"/>
    <property type="evidence" value="ECO:0000250"/>
    <property type="project" value="UniProtKB"/>
</dbReference>
<dbReference type="GO" id="GO:0000380">
    <property type="term" value="P:alternative mRNA splicing, via spliceosome"/>
    <property type="evidence" value="ECO:0000303"/>
    <property type="project" value="ComplexPortal"/>
</dbReference>
<dbReference type="GO" id="GO:0002191">
    <property type="term" value="P:cap-dependent translational initiation"/>
    <property type="evidence" value="ECO:0000303"/>
    <property type="project" value="ComplexPortal"/>
</dbReference>
<dbReference type="GO" id="GO:0008334">
    <property type="term" value="P:histone mRNA metabolic process"/>
    <property type="evidence" value="ECO:0000315"/>
    <property type="project" value="ComplexPortal"/>
</dbReference>
<dbReference type="GO" id="GO:0035195">
    <property type="term" value="P:miRNA-mediated post-transcriptional gene silencing"/>
    <property type="evidence" value="ECO:0000303"/>
    <property type="project" value="ComplexPortal"/>
</dbReference>
<dbReference type="GO" id="GO:0031124">
    <property type="term" value="P:mRNA 3'-end processing"/>
    <property type="evidence" value="ECO:0000303"/>
    <property type="project" value="ComplexPortal"/>
</dbReference>
<dbReference type="GO" id="GO:0045292">
    <property type="term" value="P:mRNA cis splicing, via spliceosome"/>
    <property type="evidence" value="ECO:0000250"/>
    <property type="project" value="UniProtKB"/>
</dbReference>
<dbReference type="GO" id="GO:0006406">
    <property type="term" value="P:mRNA export from nucleus"/>
    <property type="evidence" value="ECO:0000266"/>
    <property type="project" value="ComplexPortal"/>
</dbReference>
<dbReference type="GO" id="GO:0000398">
    <property type="term" value="P:mRNA splicing, via spliceosome"/>
    <property type="evidence" value="ECO:0000303"/>
    <property type="project" value="ComplexPortal"/>
</dbReference>
<dbReference type="GO" id="GO:0042789">
    <property type="term" value="P:mRNA transcription by RNA polymerase II"/>
    <property type="evidence" value="ECO:0000266"/>
    <property type="project" value="ComplexPortal"/>
</dbReference>
<dbReference type="GO" id="GO:0000184">
    <property type="term" value="P:nuclear-transcribed mRNA catabolic process, nonsense-mediated decay"/>
    <property type="evidence" value="ECO:0000250"/>
    <property type="project" value="UniProtKB"/>
</dbReference>
<dbReference type="GO" id="GO:0031442">
    <property type="term" value="P:positive regulation of mRNA 3'-end processing"/>
    <property type="evidence" value="ECO:0007669"/>
    <property type="project" value="Ensembl"/>
</dbReference>
<dbReference type="GO" id="GO:0046833">
    <property type="term" value="P:positive regulation of RNA export from nucleus"/>
    <property type="evidence" value="ECO:0000250"/>
    <property type="project" value="UniProtKB"/>
</dbReference>
<dbReference type="GO" id="GO:0032968">
    <property type="term" value="P:positive regulation of transcription elongation by RNA polymerase II"/>
    <property type="evidence" value="ECO:0000303"/>
    <property type="project" value="ComplexPortal"/>
</dbReference>
<dbReference type="GO" id="GO:0031053">
    <property type="term" value="P:primary miRNA processing"/>
    <property type="evidence" value="ECO:0000303"/>
    <property type="project" value="ComplexPortal"/>
</dbReference>
<dbReference type="GO" id="GO:0006446">
    <property type="term" value="P:regulation of translational initiation"/>
    <property type="evidence" value="ECO:0000250"/>
    <property type="project" value="UniProtKB"/>
</dbReference>
<dbReference type="GO" id="GO:0008380">
    <property type="term" value="P:RNA splicing"/>
    <property type="evidence" value="ECO:0000250"/>
    <property type="project" value="UniProtKB"/>
</dbReference>
<dbReference type="GO" id="GO:0006408">
    <property type="term" value="P:snRNA export from nucleus"/>
    <property type="evidence" value="ECO:0000250"/>
    <property type="project" value="UniProtKB"/>
</dbReference>
<dbReference type="CDD" id="cd12240">
    <property type="entry name" value="RRM_NCBP2"/>
    <property type="match status" value="1"/>
</dbReference>
<dbReference type="FunFam" id="3.30.70.330:FF:000128">
    <property type="entry name" value="Nuclear cap-binding protein subunit 2"/>
    <property type="match status" value="1"/>
</dbReference>
<dbReference type="Gene3D" id="3.30.70.330">
    <property type="match status" value="1"/>
</dbReference>
<dbReference type="InterPro" id="IPR027157">
    <property type="entry name" value="NCBP2"/>
</dbReference>
<dbReference type="InterPro" id="IPR034148">
    <property type="entry name" value="NCBP2_RRM"/>
</dbReference>
<dbReference type="InterPro" id="IPR012677">
    <property type="entry name" value="Nucleotide-bd_a/b_plait_sf"/>
</dbReference>
<dbReference type="InterPro" id="IPR035979">
    <property type="entry name" value="RBD_domain_sf"/>
</dbReference>
<dbReference type="InterPro" id="IPR000504">
    <property type="entry name" value="RRM_dom"/>
</dbReference>
<dbReference type="PANTHER" id="PTHR18847">
    <property type="entry name" value="20 KD NUCLEAR CAP BINDING PROTEIN"/>
    <property type="match status" value="1"/>
</dbReference>
<dbReference type="PANTHER" id="PTHR18847:SF0">
    <property type="entry name" value="NUCLEAR CAP-BINDING PROTEIN SUBUNIT 2"/>
    <property type="match status" value="1"/>
</dbReference>
<dbReference type="Pfam" id="PF00076">
    <property type="entry name" value="RRM_1"/>
    <property type="match status" value="1"/>
</dbReference>
<dbReference type="SMART" id="SM00360">
    <property type="entry name" value="RRM"/>
    <property type="match status" value="1"/>
</dbReference>
<dbReference type="SUPFAM" id="SSF54928">
    <property type="entry name" value="RNA-binding domain, RBD"/>
    <property type="match status" value="1"/>
</dbReference>
<dbReference type="PROSITE" id="PS50102">
    <property type="entry name" value="RRM"/>
    <property type="match status" value="1"/>
</dbReference>
<sequence>MSGGLLKALRSDSYVELSEYRDQHFRGDNEEQEKLLKKSCTLYVGNLSFYTTEEQIYELFSKSGDIKKIIMGLDKMKKTACGFCFVEYYSRADAENAMRYINGTRLDDRIIRTDWDAGFKEGRQYGRGRSGGQVRDEYREDYDAGRGGYGKLAQKQ</sequence>
<evidence type="ECO:0000250" key="1"/>
<evidence type="ECO:0000250" key="2">
    <source>
        <dbReference type="UniProtKB" id="P52298"/>
    </source>
</evidence>
<evidence type="ECO:0000255" key="3">
    <source>
        <dbReference type="PROSITE-ProRule" id="PRU00176"/>
    </source>
</evidence>
<evidence type="ECO:0000256" key="4">
    <source>
        <dbReference type="SAM" id="MobiDB-lite"/>
    </source>
</evidence>
<evidence type="ECO:0000269" key="5">
    <source>
    </source>
</evidence>
<evidence type="ECO:0000269" key="6">
    <source>
    </source>
</evidence>
<evidence type="ECO:0000305" key="7"/>
<evidence type="ECO:0007744" key="8">
    <source>
    </source>
</evidence>
<evidence type="ECO:0007744" key="9">
    <source>
    </source>
</evidence>
<feature type="initiator methionine" description="Removed" evidence="2">
    <location>
        <position position="1"/>
    </location>
</feature>
<feature type="chain" id="PRO_0000081500" description="Nuclear cap-binding protein subunit 2">
    <location>
        <begin position="2"/>
        <end position="156"/>
    </location>
</feature>
<feature type="domain" description="RRM" evidence="3">
    <location>
        <begin position="40"/>
        <end position="118"/>
    </location>
</feature>
<feature type="region of interest" description="Disordered" evidence="4">
    <location>
        <begin position="124"/>
        <end position="156"/>
    </location>
</feature>
<feature type="compositionally biased region" description="Basic and acidic residues" evidence="4">
    <location>
        <begin position="134"/>
        <end position="144"/>
    </location>
</feature>
<feature type="binding site" evidence="1">
    <location>
        <position position="20"/>
    </location>
    <ligand>
        <name>mRNA</name>
        <dbReference type="ChEBI" id="CHEBI:33699"/>
    </ligand>
    <ligandPart>
        <name>mRNA cap</name>
    </ligandPart>
</feature>
<feature type="binding site" evidence="1">
    <location>
        <position position="43"/>
    </location>
    <ligand>
        <name>mRNA</name>
        <dbReference type="ChEBI" id="CHEBI:33699"/>
    </ligand>
    <ligandPart>
        <name>mRNA cap</name>
    </ligandPart>
</feature>
<feature type="binding site" evidence="1">
    <location>
        <begin position="112"/>
        <end position="116"/>
    </location>
    <ligand>
        <name>mRNA</name>
        <dbReference type="ChEBI" id="CHEBI:33699"/>
    </ligand>
    <ligandPart>
        <name>mRNA cap</name>
    </ligandPart>
</feature>
<feature type="binding site" evidence="1">
    <location>
        <begin position="123"/>
        <end position="127"/>
    </location>
    <ligand>
        <name>mRNA</name>
        <dbReference type="ChEBI" id="CHEBI:33699"/>
    </ligand>
    <ligandPart>
        <name>mRNA cap</name>
    </ligandPart>
</feature>
<feature type="binding site" evidence="1">
    <location>
        <begin position="133"/>
        <end position="134"/>
    </location>
    <ligand>
        <name>mRNA</name>
        <dbReference type="ChEBI" id="CHEBI:33699"/>
    </ligand>
    <ligandPart>
        <name>mRNA cap</name>
    </ligandPart>
</feature>
<feature type="modified residue" description="N-acetylserine" evidence="2">
    <location>
        <position position="2"/>
    </location>
</feature>
<feature type="modified residue" description="Phosphoserine" evidence="8">
    <location>
        <position position="13"/>
    </location>
</feature>
<feature type="modified residue" description="Phosphoserine" evidence="2">
    <location>
        <position position="18"/>
    </location>
</feature>
<feature type="modified residue" description="Omega-N-methylarginine" evidence="9">
    <location>
        <position position="146"/>
    </location>
</feature>
<organism>
    <name type="scientific">Mus musculus</name>
    <name type="common">Mouse</name>
    <dbReference type="NCBI Taxonomy" id="10090"/>
    <lineage>
        <taxon>Eukaryota</taxon>
        <taxon>Metazoa</taxon>
        <taxon>Chordata</taxon>
        <taxon>Craniata</taxon>
        <taxon>Vertebrata</taxon>
        <taxon>Euteleostomi</taxon>
        <taxon>Mammalia</taxon>
        <taxon>Eutheria</taxon>
        <taxon>Euarchontoglires</taxon>
        <taxon>Glires</taxon>
        <taxon>Rodentia</taxon>
        <taxon>Myomorpha</taxon>
        <taxon>Muroidea</taxon>
        <taxon>Muridae</taxon>
        <taxon>Murinae</taxon>
        <taxon>Mus</taxon>
        <taxon>Mus</taxon>
    </lineage>
</organism>
<keyword id="KW-0007">Acetylation</keyword>
<keyword id="KW-0963">Cytoplasm</keyword>
<keyword id="KW-0488">Methylation</keyword>
<keyword id="KW-0507">mRNA processing</keyword>
<keyword id="KW-0508">mRNA splicing</keyword>
<keyword id="KW-0509">mRNA transport</keyword>
<keyword id="KW-0866">Nonsense-mediated mRNA decay</keyword>
<keyword id="KW-0539">Nucleus</keyword>
<keyword id="KW-0597">Phosphoprotein</keyword>
<keyword id="KW-1185">Reference proteome</keyword>
<keyword id="KW-0694">RNA-binding</keyword>
<keyword id="KW-0943">RNA-mediated gene silencing</keyword>
<keyword id="KW-0810">Translation regulation</keyword>
<keyword id="KW-0813">Transport</keyword>
<accession>Q9CQ49</accession>
<accession>Q0VF93</accession>
<accession>Q3UI86</accession>
<comment type="function">
    <text evidence="2 6">Component of the cap-binding complex (CBC), which binds co-transcriptionally to the 5' cap of pre-mRNAs and is involved in various processes such as pre-mRNA splicing, translation regulation, nonsense-mediated mRNA decay, RNA-mediated gene silencing (RNAi) by microRNAs (miRNAs) and mRNA export. The CBC complex is involved in mRNA export from the nucleus via its interaction with ALYREF/THOC4/ALY, leading to the recruitment of the mRNA export machinery to the 5' end of mRNA and to mRNA export in a 5' to 3' direction through the nuclear pore. The CBC complex is also involved in mediating U snRNA and intronless mRNAs export from the nucleus. The CBC complex is essential for a pioneer round of mRNA translation, before steady state translation when the CBC complex is replaced by cytoplasmic cap-binding protein eIF4E. The pioneer round of mRNA translation mediated by the CBC complex plays a central role in nonsense-mediated mRNA decay (NMD), NMD only taking place in mRNAs bound to the CBC complex, but not on eIF4E-bound mRNAs. The CBC complex enhances NMD in mRNAs containing at least one exon-junction complex (EJC) via its interaction with UPF1, promoting the interaction between UPF1 and UPF2. The CBC complex is also involved in 'failsafe' NMD, which is independent of the EJC complex, while it does not participate in Staufen-mediated mRNA decay (SMD). During cell proliferation, the CBC complex is also involved in microRNAs (miRNAs) biogenesis via its interaction with SRRT/ARS2, thereby being required for miRNA-mediated RNA interference. The CBC complex also acts as a negative regulator of PARN, thereby acting as an inhibitor of mRNA deadenylation. In the CBC complex, NCBP2/CBP20 recognizes and binds capped RNAs (m7GpppG-capped RNA) but requires NCBP1/CBP80 to stabilize the movement of its N-terminal loop and lock the CBC into a high affinity cap-binding state with the cap structure. The conventional cap-binding complex with NCBP2 binds both small nuclear RNA (snRNA) and messenger (mRNA) and is involved in their export from the nucleus (By similarity).</text>
</comment>
<comment type="subunit">
    <text evidence="2 5">Component of the nuclear cap-binding complex (CBC), a heterodimer composed of NCBP1/CBP80 and NCBP2/CBP20 that interacts with m7GpppG-capped RNA (By similarity). Found in a U snRNA export complex with PHAX/RNUXA, NCBP1/CBP80, NCBP2/CBP20, RAN, XPO1 and m7G-capped RNA (PubMed:10786834). Interacts with PHAX/RNUXA, EIF4G1, HNRNPF, HNRNPH1 and ALYREF/THOC4/ALY (By similarity). Interacts with SRRT/ARS2 and KPNA3 (By similarity).</text>
</comment>
<comment type="subcellular location">
    <subcellularLocation>
        <location evidence="2">Nucleus</location>
    </subcellularLocation>
    <subcellularLocation>
        <location evidence="2">Cytoplasm</location>
    </subcellularLocation>
</comment>
<comment type="similarity">
    <text evidence="7">Belongs to the RRM NCBP2 family.</text>
</comment>